<gene>
    <name type="primary">GLRB</name>
</gene>
<dbReference type="EMBL" id="U33267">
    <property type="protein sequence ID" value="AAB37750.1"/>
    <property type="molecule type" value="mRNA"/>
</dbReference>
<dbReference type="EMBL" id="AF094754">
    <property type="protein sequence ID" value="AAC71033.1"/>
    <property type="molecule type" value="mRNA"/>
</dbReference>
<dbReference type="EMBL" id="AF094755">
    <property type="protein sequence ID" value="AAC71034.1"/>
    <property type="molecule type" value="mRNA"/>
</dbReference>
<dbReference type="EMBL" id="CD013911">
    <property type="status" value="NOT_ANNOTATED_CDS"/>
    <property type="molecule type" value="mRNA"/>
</dbReference>
<dbReference type="EMBL" id="AK290617">
    <property type="protein sequence ID" value="BAF83306.1"/>
    <property type="molecule type" value="mRNA"/>
</dbReference>
<dbReference type="EMBL" id="AC079403">
    <property type="status" value="NOT_ANNOTATED_CDS"/>
    <property type="molecule type" value="Genomic_DNA"/>
</dbReference>
<dbReference type="EMBL" id="CH471056">
    <property type="protein sequence ID" value="EAX04872.1"/>
    <property type="molecule type" value="Genomic_DNA"/>
</dbReference>
<dbReference type="EMBL" id="CH471056">
    <property type="protein sequence ID" value="EAX04873.1"/>
    <property type="molecule type" value="Genomic_DNA"/>
</dbReference>
<dbReference type="EMBL" id="BC032635">
    <property type="protein sequence ID" value="AAH32635.1"/>
    <property type="molecule type" value="mRNA"/>
</dbReference>
<dbReference type="CCDS" id="CCDS3796.1">
    <molecule id="P48167-1"/>
</dbReference>
<dbReference type="CCDS" id="CCDS54813.1">
    <molecule id="P48167-2"/>
</dbReference>
<dbReference type="PIR" id="G02031">
    <property type="entry name" value="G02031"/>
</dbReference>
<dbReference type="RefSeq" id="NP_000815.1">
    <molecule id="P48167-1"/>
    <property type="nucleotide sequence ID" value="NM_000824.5"/>
</dbReference>
<dbReference type="RefSeq" id="NP_001159532.1">
    <molecule id="P48167-1"/>
    <property type="nucleotide sequence ID" value="NM_001166060.2"/>
</dbReference>
<dbReference type="RefSeq" id="NP_001159533.1">
    <molecule id="P48167-2"/>
    <property type="nucleotide sequence ID" value="NM_001166061.2"/>
</dbReference>
<dbReference type="RefSeq" id="XP_016863524.1">
    <molecule id="P48167-2"/>
    <property type="nucleotide sequence ID" value="XM_017008035.3"/>
</dbReference>
<dbReference type="RefSeq" id="XP_054205677.1">
    <molecule id="P48167-2"/>
    <property type="nucleotide sequence ID" value="XM_054349702.1"/>
</dbReference>
<dbReference type="PDB" id="5BKF">
    <property type="method" value="EM"/>
    <property type="resolution" value="3.60 A"/>
    <property type="chains" value="E=25-355, E=400-497"/>
</dbReference>
<dbReference type="PDB" id="5BKG">
    <property type="method" value="EM"/>
    <property type="resolution" value="3.80 A"/>
    <property type="chains" value="E=25-355, E=400-497"/>
</dbReference>
<dbReference type="PDB" id="7KUY">
    <property type="method" value="EM"/>
    <property type="resolution" value="3.60 A"/>
    <property type="chains" value="E=25-355, E=400-497"/>
</dbReference>
<dbReference type="PDB" id="7L31">
    <property type="method" value="EM"/>
    <property type="resolution" value="3.80 A"/>
    <property type="chains" value="E=25-353, E=400-497"/>
</dbReference>
<dbReference type="PDB" id="8DN2">
    <property type="method" value="EM"/>
    <property type="resolution" value="3.90 A"/>
    <property type="chains" value="E=25-355, E=400-480"/>
</dbReference>
<dbReference type="PDB" id="8DN3">
    <property type="method" value="EM"/>
    <property type="resolution" value="3.55 A"/>
    <property type="chains" value="E=25-355, E=400-480"/>
</dbReference>
<dbReference type="PDB" id="8DN4">
    <property type="method" value="EM"/>
    <property type="resolution" value="4.10 A"/>
    <property type="chains" value="E=25-356, E=400-480"/>
</dbReference>
<dbReference type="PDB" id="8DN5">
    <property type="method" value="EM"/>
    <property type="resolution" value="3.63 A"/>
    <property type="chains" value="E=25-355, E=400-480"/>
</dbReference>
<dbReference type="PDBsum" id="5BKF"/>
<dbReference type="PDBsum" id="5BKG"/>
<dbReference type="PDBsum" id="7KUY"/>
<dbReference type="PDBsum" id="7L31"/>
<dbReference type="PDBsum" id="8DN2"/>
<dbReference type="PDBsum" id="8DN3"/>
<dbReference type="PDBsum" id="8DN4"/>
<dbReference type="PDBsum" id="8DN5"/>
<dbReference type="EMDB" id="EMD-23041"/>
<dbReference type="EMDB" id="EMD-23148"/>
<dbReference type="EMDB" id="EMD-9403"/>
<dbReference type="EMDB" id="EMD-9404"/>
<dbReference type="SMR" id="P48167"/>
<dbReference type="BioGRID" id="109005">
    <property type="interactions" value="40"/>
</dbReference>
<dbReference type="ComplexPortal" id="CPX-7841">
    <property type="entry name" value="Glycine receptor complex, GLRA1-GLRB"/>
</dbReference>
<dbReference type="ComplexPortal" id="CPX-7844">
    <property type="entry name" value="Glycine receptor complex, GLRA2-GLRB"/>
</dbReference>
<dbReference type="ComplexPortal" id="CPX-7845">
    <property type="entry name" value="Glycine receptor complex, GLRA3-GLRB"/>
</dbReference>
<dbReference type="CORUM" id="P48167"/>
<dbReference type="FunCoup" id="P48167">
    <property type="interactions" value="1228"/>
</dbReference>
<dbReference type="IntAct" id="P48167">
    <property type="interactions" value="40"/>
</dbReference>
<dbReference type="MINT" id="P48167"/>
<dbReference type="STRING" id="9606.ENSP00000264428"/>
<dbReference type="BindingDB" id="P48167"/>
<dbReference type="ChEMBL" id="CHEMBL2363052"/>
<dbReference type="ChEMBL" id="CHEMBL4106144"/>
<dbReference type="ChEMBL" id="CHEMBL4296075"/>
<dbReference type="DrugBank" id="DB09061">
    <property type="generic name" value="Cannabidiol"/>
</dbReference>
<dbReference type="DrugBank" id="DB06741">
    <property type="generic name" value="Gavestinel"/>
</dbReference>
<dbReference type="DrugBank" id="DB06743">
    <property type="generic name" value="Ginkgolide A"/>
</dbReference>
<dbReference type="DrugBank" id="DB00145">
    <property type="generic name" value="Glycine"/>
</dbReference>
<dbReference type="DrugBank" id="DB00431">
    <property type="generic name" value="Lindane"/>
</dbReference>
<dbReference type="DrugBank" id="DB14009">
    <property type="generic name" value="Medical Cannabis"/>
</dbReference>
<dbReference type="DrugBank" id="DB14011">
    <property type="generic name" value="Nabiximols"/>
</dbReference>
<dbReference type="DrugBank" id="DB05885">
    <property type="generic name" value="Seletracetam"/>
</dbReference>
<dbReference type="DrugBank" id="DB15954">
    <property type="generic name" value="Strychnine"/>
</dbReference>
<dbReference type="DrugBank" id="DB01956">
    <property type="generic name" value="Taurine"/>
</dbReference>
<dbReference type="DrugBank" id="DB11582">
    <property type="generic name" value="Thiocolchicoside"/>
</dbReference>
<dbReference type="DrugCentral" id="P48167"/>
<dbReference type="GuidetoPHARMACOLOGY" id="427"/>
<dbReference type="TCDB" id="1.A.9.3.1">
    <property type="family name" value="the neurotransmitter receptor, cys loop, ligand-gated ion channel (lic) family"/>
</dbReference>
<dbReference type="GlyCosmos" id="P48167">
    <property type="glycosylation" value="2 sites, No reported glycans"/>
</dbReference>
<dbReference type="GlyGen" id="P48167">
    <property type="glycosylation" value="2 sites, 1 N-linked glycan (2 sites)"/>
</dbReference>
<dbReference type="iPTMnet" id="P48167"/>
<dbReference type="PhosphoSitePlus" id="P48167"/>
<dbReference type="BioMuta" id="GLRB"/>
<dbReference type="DMDM" id="1346173"/>
<dbReference type="jPOST" id="P48167"/>
<dbReference type="MassIVE" id="P48167"/>
<dbReference type="PaxDb" id="9606-ENSP00000264428"/>
<dbReference type="PeptideAtlas" id="P48167"/>
<dbReference type="ProteomicsDB" id="24087"/>
<dbReference type="ProteomicsDB" id="55869">
    <molecule id="P48167-1"/>
</dbReference>
<dbReference type="Antibodypedia" id="66124">
    <property type="antibodies" value="168 antibodies from 28 providers"/>
</dbReference>
<dbReference type="DNASU" id="2743"/>
<dbReference type="Ensembl" id="ENST00000264428.9">
    <molecule id="P48167-1"/>
    <property type="protein sequence ID" value="ENSP00000264428.4"/>
    <property type="gene ID" value="ENSG00000109738.11"/>
</dbReference>
<dbReference type="Ensembl" id="ENST00000509282.1">
    <molecule id="P48167-1"/>
    <property type="protein sequence ID" value="ENSP00000427186.1"/>
    <property type="gene ID" value="ENSG00000109738.11"/>
</dbReference>
<dbReference type="Ensembl" id="ENST00000541722.5">
    <molecule id="P48167-2"/>
    <property type="protein sequence ID" value="ENSP00000441873.1"/>
    <property type="gene ID" value="ENSG00000109738.11"/>
</dbReference>
<dbReference type="GeneID" id="2743"/>
<dbReference type="KEGG" id="hsa:2743"/>
<dbReference type="MANE-Select" id="ENST00000264428.9">
    <property type="protein sequence ID" value="ENSP00000264428.4"/>
    <property type="RefSeq nucleotide sequence ID" value="NM_000824.5"/>
    <property type="RefSeq protein sequence ID" value="NP_000815.1"/>
</dbReference>
<dbReference type="UCSC" id="uc003ipj.3">
    <molecule id="P48167-1"/>
    <property type="organism name" value="human"/>
</dbReference>
<dbReference type="AGR" id="HGNC:4329"/>
<dbReference type="CTD" id="2743"/>
<dbReference type="DisGeNET" id="2743"/>
<dbReference type="GeneCards" id="GLRB"/>
<dbReference type="GeneReviews" id="GLRB"/>
<dbReference type="HGNC" id="HGNC:4329">
    <property type="gene designation" value="GLRB"/>
</dbReference>
<dbReference type="HPA" id="ENSG00000109738">
    <property type="expression patterns" value="Tissue enhanced (brain, parathyroid gland)"/>
</dbReference>
<dbReference type="MalaCards" id="GLRB"/>
<dbReference type="MIM" id="138492">
    <property type="type" value="gene"/>
</dbReference>
<dbReference type="MIM" id="614619">
    <property type="type" value="phenotype"/>
</dbReference>
<dbReference type="neXtProt" id="NX_P48167"/>
<dbReference type="OpenTargets" id="ENSG00000109738"/>
<dbReference type="Orphanet" id="3197">
    <property type="disease" value="Hereditary hyperekplexia"/>
</dbReference>
<dbReference type="PharmGKB" id="PA28730"/>
<dbReference type="VEuPathDB" id="HostDB:ENSG00000109738"/>
<dbReference type="eggNOG" id="KOG3644">
    <property type="taxonomic scope" value="Eukaryota"/>
</dbReference>
<dbReference type="GeneTree" id="ENSGT00940000156344"/>
<dbReference type="HOGENOM" id="CLU_010920_1_4_1"/>
<dbReference type="InParanoid" id="P48167"/>
<dbReference type="OMA" id="KFFWGIL"/>
<dbReference type="OrthoDB" id="407674at2759"/>
<dbReference type="PAN-GO" id="P48167">
    <property type="GO annotations" value="13 GO annotations based on evolutionary models"/>
</dbReference>
<dbReference type="PhylomeDB" id="P48167"/>
<dbReference type="TreeFam" id="TF315453"/>
<dbReference type="PathwayCommons" id="P48167"/>
<dbReference type="Reactome" id="R-HSA-112314">
    <property type="pathway name" value="Neurotransmitter receptors and postsynaptic signal transmission"/>
</dbReference>
<dbReference type="SignaLink" id="P48167"/>
<dbReference type="SIGNOR" id="P48167"/>
<dbReference type="BioGRID-ORCS" id="2743">
    <property type="hits" value="6 hits in 1152 CRISPR screens"/>
</dbReference>
<dbReference type="ChiTaRS" id="GLRB">
    <property type="organism name" value="human"/>
</dbReference>
<dbReference type="GeneWiki" id="GLRB"/>
<dbReference type="GenomeRNAi" id="2743"/>
<dbReference type="Pharos" id="P48167">
    <property type="development level" value="Tclin"/>
</dbReference>
<dbReference type="PRO" id="PR:P48167"/>
<dbReference type="Proteomes" id="UP000005640">
    <property type="component" value="Chromosome 4"/>
</dbReference>
<dbReference type="RNAct" id="P48167">
    <property type="molecule type" value="protein"/>
</dbReference>
<dbReference type="Bgee" id="ENSG00000109738">
    <property type="expression patterns" value="Expressed in frontal pole and 163 other cell types or tissues"/>
</dbReference>
<dbReference type="ExpressionAtlas" id="P48167">
    <property type="expression patterns" value="baseline and differential"/>
</dbReference>
<dbReference type="GO" id="GO:0005737">
    <property type="term" value="C:cytoplasm"/>
    <property type="evidence" value="ECO:0007669"/>
    <property type="project" value="UniProtKB-SubCell"/>
</dbReference>
<dbReference type="GO" id="GO:0030425">
    <property type="term" value="C:dendrite"/>
    <property type="evidence" value="ECO:0007669"/>
    <property type="project" value="UniProtKB-SubCell"/>
</dbReference>
<dbReference type="GO" id="GO:0098982">
    <property type="term" value="C:GABA-ergic synapse"/>
    <property type="evidence" value="ECO:0007669"/>
    <property type="project" value="Ensembl"/>
</dbReference>
<dbReference type="GO" id="GO:0016935">
    <property type="term" value="C:glycine-gated chloride channel complex"/>
    <property type="evidence" value="ECO:0000314"/>
    <property type="project" value="UniProtKB"/>
</dbReference>
<dbReference type="GO" id="GO:0098690">
    <property type="term" value="C:glycinergic synapse"/>
    <property type="evidence" value="ECO:0007669"/>
    <property type="project" value="Ensembl"/>
</dbReference>
<dbReference type="GO" id="GO:0005886">
    <property type="term" value="C:plasma membrane"/>
    <property type="evidence" value="ECO:0000314"/>
    <property type="project" value="UniProtKB"/>
</dbReference>
<dbReference type="GO" id="GO:0045211">
    <property type="term" value="C:postsynaptic membrane"/>
    <property type="evidence" value="ECO:0007669"/>
    <property type="project" value="UniProtKB-SubCell"/>
</dbReference>
<dbReference type="GO" id="GO:0099572">
    <property type="term" value="C:postsynaptic specialization"/>
    <property type="evidence" value="ECO:0007669"/>
    <property type="project" value="Ensembl"/>
</dbReference>
<dbReference type="GO" id="GO:0016934">
    <property type="term" value="F:extracellularly glycine-gated chloride channel activity"/>
    <property type="evidence" value="ECO:0007669"/>
    <property type="project" value="Ensembl"/>
</dbReference>
<dbReference type="GO" id="GO:0016933">
    <property type="term" value="F:extracellularly glycine-gated ion channel activity"/>
    <property type="evidence" value="ECO:0000315"/>
    <property type="project" value="UniProtKB"/>
</dbReference>
<dbReference type="GO" id="GO:0016594">
    <property type="term" value="F:glycine binding"/>
    <property type="evidence" value="ECO:0007669"/>
    <property type="project" value="Ensembl"/>
</dbReference>
<dbReference type="GO" id="GO:0044877">
    <property type="term" value="F:protein-containing complex binding"/>
    <property type="evidence" value="ECO:0007669"/>
    <property type="project" value="Ensembl"/>
</dbReference>
<dbReference type="GO" id="GO:0004888">
    <property type="term" value="F:transmembrane signaling receptor activity"/>
    <property type="evidence" value="ECO:0007669"/>
    <property type="project" value="InterPro"/>
</dbReference>
<dbReference type="GO" id="GO:1904315">
    <property type="term" value="F:transmitter-gated monoatomic ion channel activity involved in regulation of postsynaptic membrane potential"/>
    <property type="evidence" value="ECO:0007669"/>
    <property type="project" value="Ensembl"/>
</dbReference>
<dbReference type="GO" id="GO:0007340">
    <property type="term" value="P:acrosome reaction"/>
    <property type="evidence" value="ECO:0007669"/>
    <property type="project" value="Ensembl"/>
</dbReference>
<dbReference type="GO" id="GO:0007628">
    <property type="term" value="P:adult walking behavior"/>
    <property type="evidence" value="ECO:0007669"/>
    <property type="project" value="Ensembl"/>
</dbReference>
<dbReference type="GO" id="GO:0007268">
    <property type="term" value="P:chemical synaptic transmission"/>
    <property type="evidence" value="ECO:0000315"/>
    <property type="project" value="UniProtKB"/>
</dbReference>
<dbReference type="GO" id="GO:1902476">
    <property type="term" value="P:chloride transmembrane transport"/>
    <property type="evidence" value="ECO:0000315"/>
    <property type="project" value="UniProtKB"/>
</dbReference>
<dbReference type="GO" id="GO:0097112">
    <property type="term" value="P:gamma-aminobutyric acid receptor clustering"/>
    <property type="evidence" value="ECO:0007669"/>
    <property type="project" value="Ensembl"/>
</dbReference>
<dbReference type="GO" id="GO:0006811">
    <property type="term" value="P:monoatomic ion transport"/>
    <property type="evidence" value="ECO:0000314"/>
    <property type="project" value="UniProtKB"/>
</dbReference>
<dbReference type="GO" id="GO:0007399">
    <property type="term" value="P:nervous system development"/>
    <property type="evidence" value="ECO:0000315"/>
    <property type="project" value="UniProtKB"/>
</dbReference>
<dbReference type="GO" id="GO:0007218">
    <property type="term" value="P:neuropeptide signaling pathway"/>
    <property type="evidence" value="ECO:0000314"/>
    <property type="project" value="UniProtKB"/>
</dbReference>
<dbReference type="GO" id="GO:0060013">
    <property type="term" value="P:righting reflex"/>
    <property type="evidence" value="ECO:0007669"/>
    <property type="project" value="Ensembl"/>
</dbReference>
<dbReference type="GO" id="GO:0001964">
    <property type="term" value="P:startle response"/>
    <property type="evidence" value="ECO:0000315"/>
    <property type="project" value="UniProtKB"/>
</dbReference>
<dbReference type="GO" id="GO:0060012">
    <property type="term" value="P:synaptic transmission, glycinergic"/>
    <property type="evidence" value="ECO:0000318"/>
    <property type="project" value="GO_Central"/>
</dbReference>
<dbReference type="GO" id="GO:0007601">
    <property type="term" value="P:visual perception"/>
    <property type="evidence" value="ECO:0007669"/>
    <property type="project" value="Ensembl"/>
</dbReference>
<dbReference type="CDD" id="cd19010">
    <property type="entry name" value="LGIC_ECD_GlyR_beta"/>
    <property type="match status" value="1"/>
</dbReference>
<dbReference type="CDD" id="cd19061">
    <property type="entry name" value="LGIC_TM_GlyR_beta"/>
    <property type="match status" value="1"/>
</dbReference>
<dbReference type="FunFam" id="1.20.58.390:FF:000070">
    <property type="entry name" value="Glycine receptor beta"/>
    <property type="match status" value="1"/>
</dbReference>
<dbReference type="FunFam" id="2.70.170.10:FF:000014">
    <property type="entry name" value="Glycine receptor subunit beta"/>
    <property type="match status" value="1"/>
</dbReference>
<dbReference type="Gene3D" id="2.70.170.10">
    <property type="entry name" value="Neurotransmitter-gated ion-channel ligand-binding domain"/>
    <property type="match status" value="1"/>
</dbReference>
<dbReference type="Gene3D" id="1.20.58.390">
    <property type="entry name" value="Neurotransmitter-gated ion-channel transmembrane domain"/>
    <property type="match status" value="1"/>
</dbReference>
<dbReference type="InterPro" id="IPR008060">
    <property type="entry name" value="Glycine_rcpt_B"/>
</dbReference>
<dbReference type="InterPro" id="IPR047031">
    <property type="entry name" value="GlyR_beta__ECD"/>
</dbReference>
<dbReference type="InterPro" id="IPR047029">
    <property type="entry name" value="GlyR_beta_TM"/>
</dbReference>
<dbReference type="InterPro" id="IPR006202">
    <property type="entry name" value="Neur_chan_lig-bd"/>
</dbReference>
<dbReference type="InterPro" id="IPR036734">
    <property type="entry name" value="Neur_chan_lig-bd_sf"/>
</dbReference>
<dbReference type="InterPro" id="IPR006201">
    <property type="entry name" value="Neur_channel"/>
</dbReference>
<dbReference type="InterPro" id="IPR036719">
    <property type="entry name" value="Neuro-gated_channel_TM_sf"/>
</dbReference>
<dbReference type="InterPro" id="IPR038050">
    <property type="entry name" value="Neuro_actylchol_rec"/>
</dbReference>
<dbReference type="InterPro" id="IPR006029">
    <property type="entry name" value="Neurotrans-gated_channel_TM"/>
</dbReference>
<dbReference type="InterPro" id="IPR018000">
    <property type="entry name" value="Neurotransmitter_ion_chnl_CS"/>
</dbReference>
<dbReference type="NCBIfam" id="TIGR00860">
    <property type="entry name" value="LIC"/>
    <property type="match status" value="1"/>
</dbReference>
<dbReference type="PANTHER" id="PTHR18945">
    <property type="entry name" value="NEUROTRANSMITTER GATED ION CHANNEL"/>
    <property type="match status" value="1"/>
</dbReference>
<dbReference type="Pfam" id="PF02931">
    <property type="entry name" value="Neur_chan_LBD"/>
    <property type="match status" value="1"/>
</dbReference>
<dbReference type="Pfam" id="PF02932">
    <property type="entry name" value="Neur_chan_memb"/>
    <property type="match status" value="1"/>
</dbReference>
<dbReference type="PRINTS" id="PR01677">
    <property type="entry name" value="GLYRBETA"/>
</dbReference>
<dbReference type="PRINTS" id="PR00252">
    <property type="entry name" value="NRIONCHANNEL"/>
</dbReference>
<dbReference type="SUPFAM" id="SSF90112">
    <property type="entry name" value="Neurotransmitter-gated ion-channel transmembrane pore"/>
    <property type="match status" value="1"/>
</dbReference>
<dbReference type="SUPFAM" id="SSF63712">
    <property type="entry name" value="Nicotinic receptor ligand binding domain-like"/>
    <property type="match status" value="1"/>
</dbReference>
<dbReference type="PROSITE" id="PS00236">
    <property type="entry name" value="NEUROTR_ION_CHANNEL"/>
    <property type="match status" value="1"/>
</dbReference>
<name>GLRB_HUMAN</name>
<reference key="1">
    <citation type="journal article" date="1996" name="Brain Res. Mol. Brain Res.">
        <title>The human glycine receptor beta subunit: primary structure, functional characterisation and chromosomal localisation of the human and murine genes.</title>
        <authorList>
            <person name="Handford C.A."/>
            <person name="Lynch J.W."/>
            <person name="Baker E."/>
            <person name="Webb G.C."/>
            <person name="Ford J.H."/>
            <person name="Sutherland G.R."/>
            <person name="Schofield P.R."/>
        </authorList>
    </citation>
    <scope>NUCLEOTIDE SEQUENCE [MRNA] (ISOFORM 1)</scope>
    <scope>FUNCTION</scope>
    <scope>SUBCELLULAR LOCATION</scope>
    <scope>SUBUNIT</scope>
    <scope>INTERACTION WITH GLRA1</scope>
    <scope>ACTIVITY REGULATION</scope>
    <source>
        <tissue>Hippocampus</tissue>
    </source>
</reference>
<reference key="2">
    <citation type="journal article" date="1998" name="Genomics">
        <title>The human glycine receptor beta subunit gene (GLRB): structure, refined chromosomal localization, and population polymorphism.</title>
        <authorList>
            <person name="Milani N."/>
            <person name="Muelhardt C."/>
            <person name="Weber R.G."/>
            <person name="Lichter P."/>
            <person name="Kioschis P."/>
            <person name="Poustka A."/>
            <person name="Becker C.-M."/>
        </authorList>
    </citation>
    <scope>NUCLEOTIDE SEQUENCE [MRNA] (ISOFORM 1)</scope>
</reference>
<reference key="3">
    <citation type="journal article" date="2004" name="Genomics">
        <title>PCR isolation and cloning of novel splice variant mRNAs from known drug target genes.</title>
        <authorList>
            <person name="Jin P."/>
            <person name="Fu G.K."/>
            <person name="Wilson A.D."/>
            <person name="Yang J."/>
            <person name="Chien D."/>
            <person name="Hawkins P.R."/>
            <person name="Au-Young J."/>
            <person name="Stuve L.L."/>
        </authorList>
    </citation>
    <scope>NUCLEOTIDE SEQUENCE [LARGE SCALE MRNA] (ISOFORM 2)</scope>
</reference>
<reference key="4">
    <citation type="journal article" date="2004" name="Nat. Genet.">
        <title>Complete sequencing and characterization of 21,243 full-length human cDNAs.</title>
        <authorList>
            <person name="Ota T."/>
            <person name="Suzuki Y."/>
            <person name="Nishikawa T."/>
            <person name="Otsuki T."/>
            <person name="Sugiyama T."/>
            <person name="Irie R."/>
            <person name="Wakamatsu A."/>
            <person name="Hayashi K."/>
            <person name="Sato H."/>
            <person name="Nagai K."/>
            <person name="Kimura K."/>
            <person name="Makita H."/>
            <person name="Sekine M."/>
            <person name="Obayashi M."/>
            <person name="Nishi T."/>
            <person name="Shibahara T."/>
            <person name="Tanaka T."/>
            <person name="Ishii S."/>
            <person name="Yamamoto J."/>
            <person name="Saito K."/>
            <person name="Kawai Y."/>
            <person name="Isono Y."/>
            <person name="Nakamura Y."/>
            <person name="Nagahari K."/>
            <person name="Murakami K."/>
            <person name="Yasuda T."/>
            <person name="Iwayanagi T."/>
            <person name="Wagatsuma M."/>
            <person name="Shiratori A."/>
            <person name="Sudo H."/>
            <person name="Hosoiri T."/>
            <person name="Kaku Y."/>
            <person name="Kodaira H."/>
            <person name="Kondo H."/>
            <person name="Sugawara M."/>
            <person name="Takahashi M."/>
            <person name="Kanda K."/>
            <person name="Yokoi T."/>
            <person name="Furuya T."/>
            <person name="Kikkawa E."/>
            <person name="Omura Y."/>
            <person name="Abe K."/>
            <person name="Kamihara K."/>
            <person name="Katsuta N."/>
            <person name="Sato K."/>
            <person name="Tanikawa M."/>
            <person name="Yamazaki M."/>
            <person name="Ninomiya K."/>
            <person name="Ishibashi T."/>
            <person name="Yamashita H."/>
            <person name="Murakawa K."/>
            <person name="Fujimori K."/>
            <person name="Tanai H."/>
            <person name="Kimata M."/>
            <person name="Watanabe M."/>
            <person name="Hiraoka S."/>
            <person name="Chiba Y."/>
            <person name="Ishida S."/>
            <person name="Ono Y."/>
            <person name="Takiguchi S."/>
            <person name="Watanabe S."/>
            <person name="Yosida M."/>
            <person name="Hotuta T."/>
            <person name="Kusano J."/>
            <person name="Kanehori K."/>
            <person name="Takahashi-Fujii A."/>
            <person name="Hara H."/>
            <person name="Tanase T.-O."/>
            <person name="Nomura Y."/>
            <person name="Togiya S."/>
            <person name="Komai F."/>
            <person name="Hara R."/>
            <person name="Takeuchi K."/>
            <person name="Arita M."/>
            <person name="Imose N."/>
            <person name="Musashino K."/>
            <person name="Yuuki H."/>
            <person name="Oshima A."/>
            <person name="Sasaki N."/>
            <person name="Aotsuka S."/>
            <person name="Yoshikawa Y."/>
            <person name="Matsunawa H."/>
            <person name="Ichihara T."/>
            <person name="Shiohata N."/>
            <person name="Sano S."/>
            <person name="Moriya S."/>
            <person name="Momiyama H."/>
            <person name="Satoh N."/>
            <person name="Takami S."/>
            <person name="Terashima Y."/>
            <person name="Suzuki O."/>
            <person name="Nakagawa S."/>
            <person name="Senoh A."/>
            <person name="Mizoguchi H."/>
            <person name="Goto Y."/>
            <person name="Shimizu F."/>
            <person name="Wakebe H."/>
            <person name="Hishigaki H."/>
            <person name="Watanabe T."/>
            <person name="Sugiyama A."/>
            <person name="Takemoto M."/>
            <person name="Kawakami B."/>
            <person name="Yamazaki M."/>
            <person name="Watanabe K."/>
            <person name="Kumagai A."/>
            <person name="Itakura S."/>
            <person name="Fukuzumi Y."/>
            <person name="Fujimori Y."/>
            <person name="Komiyama M."/>
            <person name="Tashiro H."/>
            <person name="Tanigami A."/>
            <person name="Fujiwara T."/>
            <person name="Ono T."/>
            <person name="Yamada K."/>
            <person name="Fujii Y."/>
            <person name="Ozaki K."/>
            <person name="Hirao M."/>
            <person name="Ohmori Y."/>
            <person name="Kawabata A."/>
            <person name="Hikiji T."/>
            <person name="Kobatake N."/>
            <person name="Inagaki H."/>
            <person name="Ikema Y."/>
            <person name="Okamoto S."/>
            <person name="Okitani R."/>
            <person name="Kawakami T."/>
            <person name="Noguchi S."/>
            <person name="Itoh T."/>
            <person name="Shigeta K."/>
            <person name="Senba T."/>
            <person name="Matsumura K."/>
            <person name="Nakajima Y."/>
            <person name="Mizuno T."/>
            <person name="Morinaga M."/>
            <person name="Sasaki M."/>
            <person name="Togashi T."/>
            <person name="Oyama M."/>
            <person name="Hata H."/>
            <person name="Watanabe M."/>
            <person name="Komatsu T."/>
            <person name="Mizushima-Sugano J."/>
            <person name="Satoh T."/>
            <person name="Shirai Y."/>
            <person name="Takahashi Y."/>
            <person name="Nakagawa K."/>
            <person name="Okumura K."/>
            <person name="Nagase T."/>
            <person name="Nomura N."/>
            <person name="Kikuchi H."/>
            <person name="Masuho Y."/>
            <person name="Yamashita R."/>
            <person name="Nakai K."/>
            <person name="Yada T."/>
            <person name="Nakamura Y."/>
            <person name="Ohara O."/>
            <person name="Isogai T."/>
            <person name="Sugano S."/>
        </authorList>
    </citation>
    <scope>NUCLEOTIDE SEQUENCE [LARGE SCALE MRNA] (ISOFORM 1)</scope>
    <source>
        <tissue>Heart</tissue>
    </source>
</reference>
<reference key="5">
    <citation type="journal article" date="2005" name="Nature">
        <title>Generation and annotation of the DNA sequences of human chromosomes 2 and 4.</title>
        <authorList>
            <person name="Hillier L.W."/>
            <person name="Graves T.A."/>
            <person name="Fulton R.S."/>
            <person name="Fulton L.A."/>
            <person name="Pepin K.H."/>
            <person name="Minx P."/>
            <person name="Wagner-McPherson C."/>
            <person name="Layman D."/>
            <person name="Wylie K."/>
            <person name="Sekhon M."/>
            <person name="Becker M.C."/>
            <person name="Fewell G.A."/>
            <person name="Delehaunty K.D."/>
            <person name="Miner T.L."/>
            <person name="Nash W.E."/>
            <person name="Kremitzki C."/>
            <person name="Oddy L."/>
            <person name="Du H."/>
            <person name="Sun H."/>
            <person name="Bradshaw-Cordum H."/>
            <person name="Ali J."/>
            <person name="Carter J."/>
            <person name="Cordes M."/>
            <person name="Harris A."/>
            <person name="Isak A."/>
            <person name="van Brunt A."/>
            <person name="Nguyen C."/>
            <person name="Du F."/>
            <person name="Courtney L."/>
            <person name="Kalicki J."/>
            <person name="Ozersky P."/>
            <person name="Abbott S."/>
            <person name="Armstrong J."/>
            <person name="Belter E.A."/>
            <person name="Caruso L."/>
            <person name="Cedroni M."/>
            <person name="Cotton M."/>
            <person name="Davidson T."/>
            <person name="Desai A."/>
            <person name="Elliott G."/>
            <person name="Erb T."/>
            <person name="Fronick C."/>
            <person name="Gaige T."/>
            <person name="Haakenson W."/>
            <person name="Haglund K."/>
            <person name="Holmes A."/>
            <person name="Harkins R."/>
            <person name="Kim K."/>
            <person name="Kruchowski S.S."/>
            <person name="Strong C.M."/>
            <person name="Grewal N."/>
            <person name="Goyea E."/>
            <person name="Hou S."/>
            <person name="Levy A."/>
            <person name="Martinka S."/>
            <person name="Mead K."/>
            <person name="McLellan M.D."/>
            <person name="Meyer R."/>
            <person name="Randall-Maher J."/>
            <person name="Tomlinson C."/>
            <person name="Dauphin-Kohlberg S."/>
            <person name="Kozlowicz-Reilly A."/>
            <person name="Shah N."/>
            <person name="Swearengen-Shahid S."/>
            <person name="Snider J."/>
            <person name="Strong J.T."/>
            <person name="Thompson J."/>
            <person name="Yoakum M."/>
            <person name="Leonard S."/>
            <person name="Pearman C."/>
            <person name="Trani L."/>
            <person name="Radionenko M."/>
            <person name="Waligorski J.E."/>
            <person name="Wang C."/>
            <person name="Rock S.M."/>
            <person name="Tin-Wollam A.-M."/>
            <person name="Maupin R."/>
            <person name="Latreille P."/>
            <person name="Wendl M.C."/>
            <person name="Yang S.-P."/>
            <person name="Pohl C."/>
            <person name="Wallis J.W."/>
            <person name="Spieth J."/>
            <person name="Bieri T.A."/>
            <person name="Berkowicz N."/>
            <person name="Nelson J.O."/>
            <person name="Osborne J."/>
            <person name="Ding L."/>
            <person name="Meyer R."/>
            <person name="Sabo A."/>
            <person name="Shotland Y."/>
            <person name="Sinha P."/>
            <person name="Wohldmann P.E."/>
            <person name="Cook L.L."/>
            <person name="Hickenbotham M.T."/>
            <person name="Eldred J."/>
            <person name="Williams D."/>
            <person name="Jones T.A."/>
            <person name="She X."/>
            <person name="Ciccarelli F.D."/>
            <person name="Izaurralde E."/>
            <person name="Taylor J."/>
            <person name="Schmutz J."/>
            <person name="Myers R.M."/>
            <person name="Cox D.R."/>
            <person name="Huang X."/>
            <person name="McPherson J.D."/>
            <person name="Mardis E.R."/>
            <person name="Clifton S.W."/>
            <person name="Warren W.C."/>
            <person name="Chinwalla A.T."/>
            <person name="Eddy S.R."/>
            <person name="Marra M.A."/>
            <person name="Ovcharenko I."/>
            <person name="Furey T.S."/>
            <person name="Miller W."/>
            <person name="Eichler E.E."/>
            <person name="Bork P."/>
            <person name="Suyama M."/>
            <person name="Torrents D."/>
            <person name="Waterston R.H."/>
            <person name="Wilson R.K."/>
        </authorList>
    </citation>
    <scope>NUCLEOTIDE SEQUENCE [LARGE SCALE GENOMIC DNA]</scope>
</reference>
<reference key="6">
    <citation type="submission" date="2005-09" db="EMBL/GenBank/DDBJ databases">
        <authorList>
            <person name="Mural R.J."/>
            <person name="Istrail S."/>
            <person name="Sutton G.G."/>
            <person name="Florea L."/>
            <person name="Halpern A.L."/>
            <person name="Mobarry C.M."/>
            <person name="Lippert R."/>
            <person name="Walenz B."/>
            <person name="Shatkay H."/>
            <person name="Dew I."/>
            <person name="Miller J.R."/>
            <person name="Flanigan M.J."/>
            <person name="Edwards N.J."/>
            <person name="Bolanos R."/>
            <person name="Fasulo D."/>
            <person name="Halldorsson B.V."/>
            <person name="Hannenhalli S."/>
            <person name="Turner R."/>
            <person name="Yooseph S."/>
            <person name="Lu F."/>
            <person name="Nusskern D.R."/>
            <person name="Shue B.C."/>
            <person name="Zheng X.H."/>
            <person name="Zhong F."/>
            <person name="Delcher A.L."/>
            <person name="Huson D.H."/>
            <person name="Kravitz S.A."/>
            <person name="Mouchard L."/>
            <person name="Reinert K."/>
            <person name="Remington K.A."/>
            <person name="Clark A.G."/>
            <person name="Waterman M.S."/>
            <person name="Eichler E.E."/>
            <person name="Adams M.D."/>
            <person name="Hunkapiller M.W."/>
            <person name="Myers E.W."/>
            <person name="Venter J.C."/>
        </authorList>
    </citation>
    <scope>NUCLEOTIDE SEQUENCE [LARGE SCALE GENOMIC DNA]</scope>
</reference>
<reference key="7">
    <citation type="journal article" date="2004" name="Genome Res.">
        <title>The status, quality, and expansion of the NIH full-length cDNA project: the Mammalian Gene Collection (MGC).</title>
        <authorList>
            <consortium name="The MGC Project Team"/>
        </authorList>
    </citation>
    <scope>NUCLEOTIDE SEQUENCE [LARGE SCALE MRNA] (ISOFORM 1)</scope>
    <source>
        <tissue>Brain</tissue>
    </source>
</reference>
<reference key="8">
    <citation type="journal article" date="2003" name="Eur. Biophys. J.">
        <title>Kinetic analysis of recombinant mammalian alpha(1) and alpha(1)beta glycine receptor channels.</title>
        <authorList>
            <person name="Mohammadi B."/>
            <person name="Krampfl K."/>
            <person name="Cetinkaya C."/>
            <person name="Moschref H."/>
            <person name="Grosskreutz J."/>
            <person name="Dengler R."/>
            <person name="Bufler J."/>
        </authorList>
    </citation>
    <scope>INTERACTION WITH GLRA1</scope>
</reference>
<reference key="9">
    <citation type="journal article" date="2003" name="J. Biol. Chem.">
        <title>Isoform heterogeneity of the human gephyrin gene (GPHN), binding domains to the glycine receptor, and mutation analysis in hyperekplexia.</title>
        <authorList>
            <person name="Rees M.I."/>
            <person name="Harvey K."/>
            <person name="Ward H."/>
            <person name="White J.H."/>
            <person name="Evans L."/>
            <person name="Duguid I.C."/>
            <person name="Hsu C.-C."/>
            <person name="Coleman S.L."/>
            <person name="Miller J."/>
            <person name="Baer K."/>
            <person name="Waldvogel H.J."/>
            <person name="Gibbon F."/>
            <person name="Smart T.G."/>
            <person name="Owen M.J."/>
            <person name="Harvey R.J."/>
            <person name="Snell R.G."/>
        </authorList>
    </citation>
    <scope>INTERACTION WITH GPHN</scope>
    <scope>SUBCELLULAR LOCATION</scope>
</reference>
<reference key="10">
    <citation type="journal article" date="2004" name="Br. J. Pharmacol.">
        <title>Differential agonist sensitivity of glycine receptor alpha2 subunit splice variants.</title>
        <authorList>
            <person name="Miller P.S."/>
            <person name="Harvey R.J."/>
            <person name="Smart T.G."/>
        </authorList>
    </citation>
    <scope>FUNCTION</scope>
    <scope>TRANSPORTER ACTIVITY</scope>
    <scope>INTERACTION WITH GLRA2</scope>
    <scope>SUBCELLULAR LOCATION</scope>
    <scope>SUBUNIT</scope>
</reference>
<reference key="11">
    <citation type="journal article" date="2005" name="J. Biol. Chem.">
        <title>Molecular basis for zinc potentiation at strychnine-sensitive glycine receptors.</title>
        <authorList>
            <person name="Miller P.S."/>
            <person name="Da Silva H.M."/>
            <person name="Smart T.G."/>
        </authorList>
    </citation>
    <scope>FUNCTION</scope>
    <scope>INTERACTION WITH GLRA2</scope>
    <scope>SUBCELLULAR LOCATION</scope>
    <scope>SUBUNIT</scope>
</reference>
<reference key="12">
    <citation type="journal article" date="2012" name="Biochemistry">
        <title>Stoichiometry and subunit arrangement of alpha1beta glycine receptors as determined by atomic force microscopy.</title>
        <authorList>
            <person name="Yang Z."/>
            <person name="Taran E."/>
            <person name="Webb T.I."/>
            <person name="Lynch J.W."/>
        </authorList>
    </citation>
    <scope>SUBUNIT STOICHIOMETRY</scope>
    <scope>FUNCTION</scope>
    <scope>TRANSPORTER ACTIVITY</scope>
</reference>
<reference key="13">
    <citation type="journal article" date="2012" name="J. Neurosci.">
        <title>Stoichiometry of the human glycine receptor revealed by direct subunit counting.</title>
        <authorList>
            <person name="Durisic N."/>
            <person name="Godin A.G."/>
            <person name="Wever C.M."/>
            <person name="Heyes C.D."/>
            <person name="Lakadamyali M."/>
            <person name="Dent J.A."/>
        </authorList>
    </citation>
    <scope>SUBUNIT STOICHIOMETRY</scope>
    <scope>SUBCELLULAR LOCATION</scope>
</reference>
<reference key="14">
    <citation type="journal article" date="2015" name="EMBO Mol. Med.">
        <title>Simultaneous impairment of neuronal and metabolic function of mutated gephyrin in a patient with epileptic encephalopathy.</title>
        <authorList>
            <consortium name="EuroEPINOMICS Dravet working group"/>
            <person name="Dejanovic B."/>
            <person name="Djemie T."/>
            <person name="Gruenewald N."/>
            <person name="Suls A."/>
            <person name="Kress V."/>
            <person name="Hetsch F."/>
            <person name="Craiu D."/>
            <person name="Zemel M."/>
            <person name="Gormley P."/>
            <person name="Lal D."/>
            <person name="Myers C.T."/>
            <person name="Mefford H.C."/>
            <person name="Palotie A."/>
            <person name="Helbig I."/>
            <person name="Meier J.C."/>
            <person name="De Jonghe P."/>
            <person name="Weckhuysen S."/>
            <person name="Schwarz G."/>
        </authorList>
    </citation>
    <scope>INTERACTION WITH GPHN</scope>
</reference>
<reference key="15">
    <citation type="journal article" date="2015" name="Neuropharmacology">
        <title>Functional reconstitution of glycinergic synapses incorporating defined glycine receptor subunit combinations.</title>
        <authorList>
            <person name="Zhang Y."/>
            <person name="Dixon C.L."/>
            <person name="Keramidas A."/>
            <person name="Lynch J.W."/>
        </authorList>
    </citation>
    <scope>FUNCTION</scope>
    <scope>INTERACTION WITH GLRA1; GLRA2 AND GLRA3</scope>
    <scope>SUBCELLULAR LOCATION</scope>
    <scope>SUBUNIT</scope>
</reference>
<reference evidence="23 24 25 26" key="16">
    <citation type="journal article" date="2021" name="Neuron">
        <title>Characterization of the subunit composition and structure of adult human glycine receptors.</title>
        <authorList>
            <person name="Yu H."/>
            <person name="Bai X.-C."/>
            <person name="Wang W."/>
        </authorList>
    </citation>
    <scope>STRUCTURE BY ELECTRON MICROSCOPY (3.60 ANGSTROMS) OF 25-355 AND 400-497 IN COMPLEX WITH GLRA2; GLYCINE AND ANTAGONIST STRYCHNINE</scope>
    <scope>FUNCTION</scope>
    <scope>TRANSPORTER ACTIVITY</scope>
    <scope>ACTIVITY REGULATION</scope>
    <scope>SUBUNIT</scope>
    <scope>STOICHIOMETRY</scope>
    <scope>GLYCOSYLATION AT ASN-54 AND ASN-242</scope>
    <scope>TOPOLOGY</scope>
    <scope>DISULFIDE BONDS</scope>
    <scope>MUTAGENESIS OF ASN-54 AND ASN-242</scope>
</reference>
<reference evidence="27 28 29 30" key="17">
    <citation type="journal article" date="2023" name="Nat. Commun.">
        <title>Asymmetric gating of a human hetero-pentameric glycine receptor.</title>
        <authorList>
            <person name="Liu X."/>
            <person name="Wang W."/>
        </authorList>
    </citation>
    <scope>STRUCTURE BY ELECTRON MICROSCOPY (3.55 ANGSTROMS) OF 25-355 AND 400-480 IN COMPLEX WITH GLRA1 AND GLYCINE</scope>
    <scope>STOICHIOMETRY</scope>
    <scope>TRANSPORTER ACTIVITY</scope>
    <scope>ACTIVITY REGULATION</scope>
</reference>
<reference key="18">
    <citation type="journal article" date="2002" name="Hum. Mol. Genet.">
        <title>Hyperekplexia associated with compound heterozygote mutations in the beta-subunit of the human inhibitory glycine receptor (GLRB).</title>
        <authorList>
            <person name="Rees M.I."/>
            <person name="Lewis T.M."/>
            <person name="Kwok J.B.J."/>
            <person name="Mortier G.R."/>
            <person name="Govaert P."/>
            <person name="Snell R.G."/>
            <person name="Schofield P.R."/>
            <person name="Owen M.J."/>
        </authorList>
    </citation>
    <scope>VARIANT HKPX2 ASP-251</scope>
    <scope>CHARACTERIZATION OF VARIANT HKPX2 ASP-251</scope>
    <scope>FUNCTION</scope>
    <scope>SUBCELLULAR LOCATION</scope>
    <scope>INTERACTION WITH GLRA1</scope>
</reference>
<reference key="19">
    <citation type="journal article" date="2012" name="Clin. Genet.">
        <title>Novel mutation in GLRB in a large family with hereditary hyperekplexia.</title>
        <authorList>
            <person name="Al-Owain M."/>
            <person name="Colak D."/>
            <person name="Al-Bakheet A."/>
            <person name="Al-Hashmi N."/>
            <person name="Shuaib T."/>
            <person name="Al-Hemidan A."/>
            <person name="Aldhalaan H."/>
            <person name="Rahbeeni Z."/>
            <person name="Al-Sayed M."/>
            <person name="Al-Younes B."/>
            <person name="Ozand P.T."/>
            <person name="Kaya N."/>
        </authorList>
    </citation>
    <scope>VARIANT HKPX2 ARG-199</scope>
</reference>
<reference key="20">
    <citation type="journal article" date="2013" name="Neurobiol. Dis.">
        <title>Novel missense mutations in the glycine receptor beta subunit gene (GLRB) in startle disease.</title>
        <authorList>
            <person name="James V.M."/>
            <person name="Bode A."/>
            <person name="Chung S.K."/>
            <person name="Gill J.L."/>
            <person name="Nielsen M."/>
            <person name="Cowan F.M."/>
            <person name="Vujic M."/>
            <person name="Thomas R.H."/>
            <person name="Rees M.I."/>
            <person name="Harvey K."/>
            <person name="Keramidas A."/>
            <person name="Topf M."/>
            <person name="Ginjaar I."/>
            <person name="Lynch J.W."/>
            <person name="Harvey R.J."/>
        </authorList>
    </citation>
    <scope>VARIANTS HKPX2 ARG-199; ARG-307 AND CYS-332</scope>
    <scope>CHARACTERIZATION OF VARIANTS HKPX2 ARG-199; ARG-307 AND CYS-332</scope>
    <scope>FUNCTION</scope>
    <scope>SUBCELLULAR LOCATION</scope>
    <scope>INTERACTION WITH GLRA1</scope>
</reference>
<reference key="21">
    <citation type="journal article" date="2022" name="J. Biol. Chem.">
        <title>Clinical, genetic, and functional characterization of the glycine receptor beta-subunit A455P variant in a family affected by hyperekplexia syndrome.</title>
        <authorList>
            <person name="Aboheimed G.I."/>
            <person name="AlRasheed M.M."/>
            <person name="Almudimeegh S."/>
            <person name="Pena-Guerra K.A."/>
            <person name="Cardona-Londono K.J."/>
            <person name="Salih M.A."/>
            <person name="Seidahmed M.Z."/>
            <person name="Al-Mohanna F."/>
            <person name="Colak D."/>
            <person name="Harvey R.J."/>
            <person name="Harvey K."/>
            <person name="Arold S.T."/>
            <person name="Kaya N."/>
            <person name="Ruiz A.J."/>
        </authorList>
    </citation>
    <scope>VARIANT HKPX2 PRO-477</scope>
    <scope>CHARACTERIZATION OF VARIANT HKPX2 PRO-477</scope>
    <scope>INTERACTION WITH GLRA1</scope>
    <scope>SUBCELLULAR LOCATION</scope>
</reference>
<accession>P48167</accession>
<accession>A8K3K2</accession>
<accession>D3DP23</accession>
<accession>F5GWE1</accession>
<comment type="function">
    <text evidence="5 8 9 11 13 14 16 19">Subunit of heteromeric glycine-gated chloride channels (PubMed:11929858, PubMed:15302677, PubMed:16144831, PubMed:22715885, PubMed:23238346, PubMed:25445488, PubMed:34473954, PubMed:8717357). Plays an important role in the down-regulation of neuronal excitability (PubMed:11929858, PubMed:23238346). Contributes to the generation of inhibitory postsynaptic currents (PubMed:25445488).</text>
</comment>
<comment type="catalytic activity">
    <reaction evidence="8 11 16 18">
        <text>chloride(in) = chloride(out)</text>
        <dbReference type="Rhea" id="RHEA:29823"/>
        <dbReference type="ChEBI" id="CHEBI:17996"/>
    </reaction>
</comment>
<comment type="activity regulation">
    <text evidence="16 18 19">Channel opening is triggered by extracellular glycine (PubMed:34473954, PubMed:37821459). Heteropentameric channels composed of GLRB and GLRA1 are activated by lower glycine levels than homopentameric GLRA1 (PubMed:8717357).</text>
</comment>
<comment type="subunit">
    <text evidence="5 6 7 8 9 11 12 13 14 15 16 17 18 19">Forms heteropentamers with glycin receptor alpha subunits. Heteropentamers with GLRA1 can be composed of two GLRA1 and three GLRB subunits, or three GLRA1 and two GLRB subunits, or four GLRA1 subunits and one GLRB subunit (PubMed:11929858, PubMed:14551753, PubMed:22715885, PubMed:22973015, PubMed:23238346, PubMed:25445488, PubMed:8717357, PubMed:35526563, PubMed:37821459). Forms heteropentamers with GLRA2 (PubMed:15302677, PubMed:16144831, PubMed:25445488, PubMed:34473954). Functional GLRB-GLRA2 heteropentamers contain four GLRA2 subunits and one GLRB subunit, although alternative subunit composition cannot be excluded (PubMed:34473954). Forms a heteropentamer with GLRA3 (PubMed:25445488). Interacts with GPHN (PubMed:12684523, PubMed:26613940).</text>
</comment>
<comment type="interaction">
    <interactant intactId="EBI-11733190">
        <id>P48167</id>
    </interactant>
    <interactant intactId="EBI-12020340">
        <id>P23415</id>
        <label>GLRA1</label>
    </interactant>
    <organismsDiffer>false</organismsDiffer>
    <experiments>2</experiments>
</comment>
<comment type="subcellular location">
    <subcellularLocation>
        <location evidence="4">Postsynaptic cell membrane</location>
        <topology evidence="3">Multi-pass membrane protein</topology>
    </subcellularLocation>
    <subcellularLocation>
        <location evidence="4">Synapse</location>
    </subcellularLocation>
    <subcellularLocation>
        <location evidence="4">Cell projection</location>
        <location evidence="4">Dendrite</location>
    </subcellularLocation>
    <subcellularLocation>
        <location evidence="5 6 8 9 12 13 14 17 19">Cell membrane</location>
        <topology evidence="3">Multi-pass membrane protein</topology>
    </subcellularLocation>
    <subcellularLocation>
        <location evidence="6 17">Cytoplasm</location>
    </subcellularLocation>
    <text evidence="2 6">Retained in the cytoplasm upon heterologous expression by itself. Coexpression with GPHN promotes expression at the cell membrane (PubMed:12684523). Coexpression with GLRA1, GLRA2 or GLRA3 promotes expression at the cell membrane.</text>
</comment>
<comment type="alternative products">
    <event type="alternative splicing"/>
    <isoform>
        <id>P48167-1</id>
        <name>1</name>
        <sequence type="displayed"/>
    </isoform>
    <isoform>
        <id>P48167-2</id>
        <name>2</name>
        <sequence type="described" ref="VSP_045466 VSP_045467"/>
    </isoform>
</comment>
<comment type="disease" evidence="5 10 13 17">
    <disease id="DI-03457">
        <name>Hyperekplexia 2</name>
        <acronym>HKPX2</acronym>
        <description>A neurologic disorder characterized by muscular rigidity of central nervous system origin, particularly in the neonatal period, and by an exaggerated startle response to unexpected acoustic or tactile stimuli.</description>
        <dbReference type="MIM" id="614619"/>
    </disease>
    <text>The disease is caused by variants affecting the gene represented in this entry.</text>
</comment>
<comment type="similarity">
    <text evidence="21">Belongs to the ligand-gated ion channel (TC 1.A.9) family. Glycine receptor (TC 1.A.9.3) subfamily. GLRB sub-subfamily.</text>
</comment>
<evidence type="ECO:0000250" key="1"/>
<evidence type="ECO:0000250" key="2">
    <source>
        <dbReference type="UniProtKB" id="P20781"/>
    </source>
</evidence>
<evidence type="ECO:0000250" key="3">
    <source>
        <dbReference type="UniProtKB" id="P23415"/>
    </source>
</evidence>
<evidence type="ECO:0000250" key="4">
    <source>
        <dbReference type="UniProtKB" id="P48168"/>
    </source>
</evidence>
<evidence type="ECO:0000269" key="5">
    <source>
    </source>
</evidence>
<evidence type="ECO:0000269" key="6">
    <source>
    </source>
</evidence>
<evidence type="ECO:0000269" key="7">
    <source>
    </source>
</evidence>
<evidence type="ECO:0000269" key="8">
    <source>
    </source>
</evidence>
<evidence type="ECO:0000269" key="9">
    <source>
    </source>
</evidence>
<evidence type="ECO:0000269" key="10">
    <source>
    </source>
</evidence>
<evidence type="ECO:0000269" key="11">
    <source>
    </source>
</evidence>
<evidence type="ECO:0000269" key="12">
    <source>
    </source>
</evidence>
<evidence type="ECO:0000269" key="13">
    <source>
    </source>
</evidence>
<evidence type="ECO:0000269" key="14">
    <source>
    </source>
</evidence>
<evidence type="ECO:0000269" key="15">
    <source>
    </source>
</evidence>
<evidence type="ECO:0000269" key="16">
    <source>
    </source>
</evidence>
<evidence type="ECO:0000269" key="17">
    <source>
    </source>
</evidence>
<evidence type="ECO:0000269" key="18">
    <source>
    </source>
</evidence>
<evidence type="ECO:0000269" key="19">
    <source>
    </source>
</evidence>
<evidence type="ECO:0000303" key="20">
    <source>
    </source>
</evidence>
<evidence type="ECO:0000305" key="21"/>
<evidence type="ECO:0000305" key="22">
    <source>
    </source>
</evidence>
<evidence type="ECO:0007744" key="23">
    <source>
        <dbReference type="PDB" id="5BKF"/>
    </source>
</evidence>
<evidence type="ECO:0007744" key="24">
    <source>
        <dbReference type="PDB" id="5BKG"/>
    </source>
</evidence>
<evidence type="ECO:0007744" key="25">
    <source>
        <dbReference type="PDB" id="7KUY"/>
    </source>
</evidence>
<evidence type="ECO:0007744" key="26">
    <source>
        <dbReference type="PDB" id="7L31"/>
    </source>
</evidence>
<evidence type="ECO:0007744" key="27">
    <source>
        <dbReference type="PDB" id="8DN2"/>
    </source>
</evidence>
<evidence type="ECO:0007744" key="28">
    <source>
        <dbReference type="PDB" id="8DN3"/>
    </source>
</evidence>
<evidence type="ECO:0007744" key="29">
    <source>
        <dbReference type="PDB" id="8DN4"/>
    </source>
</evidence>
<evidence type="ECO:0007744" key="30">
    <source>
        <dbReference type="PDB" id="8DN5"/>
    </source>
</evidence>
<sequence>MKFLLTTAFLILISLWVEEAYSKEKSSKKGKGKKKQYLCPSQQSAEDLARVPANSTSNILNRLLVSYDPRIRPNFKGIPVDVVVNIFINSFGSIQETTMDYRVNIFLRQKWNDPRLKLPSDFRGSDALTVDPTMYKCLWKPDLFFANEKSANFHDVTQENILLFIFRDGDVLVSMRLSITLSCPLDLTLFPMDTQRCKMQLESFGYTTDDLRFIWQSGDPVQLEKIALPQFDIKKEDIEYGNCTKYYKGTGYYTCVEVIFTLRRQVGFYMMGVYAPTLLIVVLSWLSFWINPDASAARVPLGIFSVLSLASECTTLAAELPKVSYVKALDVWLIACLLFGFASLVEYAVVQVMLNNPKRVEAEKARIAKAEQADGKGGNVAKKNTVNGTGTPVHISTLQVGETRCKKVCTSKSDLRSNDFSIVGSLPRDFELSNYDCYGKPIEVNNGLGKSQAKNNKKPPPAKPVIPTAAKRIDLYARALFPFCFLFFNVIYWSIYL</sequence>
<protein>
    <recommendedName>
        <fullName>Glycine receptor subunit beta</fullName>
    </recommendedName>
    <alternativeName>
        <fullName>Glycine receptor 58 kDa subunit</fullName>
    </alternativeName>
</protein>
<proteinExistence type="evidence at protein level"/>
<keyword id="KW-0002">3D-structure</keyword>
<keyword id="KW-0025">Alternative splicing</keyword>
<keyword id="KW-1003">Cell membrane</keyword>
<keyword id="KW-0966">Cell projection</keyword>
<keyword id="KW-0868">Chloride</keyword>
<keyword id="KW-0869">Chloride channel</keyword>
<keyword id="KW-0963">Cytoplasm</keyword>
<keyword id="KW-0225">Disease variant</keyword>
<keyword id="KW-1015">Disulfide bond</keyword>
<keyword id="KW-0325">Glycoprotein</keyword>
<keyword id="KW-0407">Ion channel</keyword>
<keyword id="KW-0406">Ion transport</keyword>
<keyword id="KW-1071">Ligand-gated ion channel</keyword>
<keyword id="KW-0472">Membrane</keyword>
<keyword id="KW-0597">Phosphoprotein</keyword>
<keyword id="KW-0628">Postsynaptic cell membrane</keyword>
<keyword id="KW-1267">Proteomics identification</keyword>
<keyword id="KW-0675">Receptor</keyword>
<keyword id="KW-1185">Reference proteome</keyword>
<keyword id="KW-0732">Signal</keyword>
<keyword id="KW-0770">Synapse</keyword>
<keyword id="KW-0812">Transmembrane</keyword>
<keyword id="KW-1133">Transmembrane helix</keyword>
<keyword id="KW-0813">Transport</keyword>
<organism>
    <name type="scientific">Homo sapiens</name>
    <name type="common">Human</name>
    <dbReference type="NCBI Taxonomy" id="9606"/>
    <lineage>
        <taxon>Eukaryota</taxon>
        <taxon>Metazoa</taxon>
        <taxon>Chordata</taxon>
        <taxon>Craniata</taxon>
        <taxon>Vertebrata</taxon>
        <taxon>Euteleostomi</taxon>
        <taxon>Mammalia</taxon>
        <taxon>Eutheria</taxon>
        <taxon>Euarchontoglires</taxon>
        <taxon>Primates</taxon>
        <taxon>Haplorrhini</taxon>
        <taxon>Catarrhini</taxon>
        <taxon>Hominidae</taxon>
        <taxon>Homo</taxon>
    </lineage>
</organism>
<feature type="signal peptide" evidence="1">
    <location>
        <begin position="1"/>
        <end position="22"/>
    </location>
</feature>
<feature type="chain" id="PRO_0000000423" description="Glycine receptor subunit beta">
    <location>
        <begin position="23"/>
        <end position="497"/>
    </location>
</feature>
<feature type="topological domain" description="Extracellular" evidence="22 23">
    <location>
        <begin position="23"/>
        <end position="268"/>
    </location>
</feature>
<feature type="transmembrane region" description="Helical; Name=1" evidence="16 23">
    <location>
        <begin position="269"/>
        <end position="289"/>
    </location>
</feature>
<feature type="topological domain" description="Cytoplasmic" evidence="22 23">
    <location>
        <begin position="290"/>
        <end position="294"/>
    </location>
</feature>
<feature type="transmembrane region" description="Helical; Name=2" evidence="16 23">
    <location>
        <begin position="295"/>
        <end position="315"/>
    </location>
</feature>
<feature type="topological domain" description="Extracellular" evidence="22 23">
    <location>
        <begin position="316"/>
        <end position="327"/>
    </location>
</feature>
<feature type="transmembrane region" description="Helical; Name=3" evidence="16 23">
    <location>
        <begin position="328"/>
        <end position="349"/>
    </location>
</feature>
<feature type="topological domain" description="Cytoplasmic" evidence="22 23">
    <location>
        <begin position="350"/>
        <end position="472"/>
    </location>
</feature>
<feature type="transmembrane region" description="Helical; Name=4" evidence="16 23">
    <location>
        <begin position="473"/>
        <end position="496"/>
    </location>
</feature>
<feature type="binding site" evidence="16 18 23 30">
    <location>
        <position position="108"/>
    </location>
    <ligand>
        <name>glycine</name>
        <dbReference type="ChEBI" id="CHEBI:57305"/>
        <label>1</label>
        <note>agonist; ligand shared with an adjacent GLRA1 subunit or GLRA2 subunit</note>
    </ligand>
</feature>
<feature type="binding site" evidence="16 18 23 30">
    <location>
        <position position="174"/>
    </location>
    <ligand>
        <name>glycine</name>
        <dbReference type="ChEBI" id="CHEBI:57305"/>
        <label>1</label>
        <note>agonist; ligand shared with an adjacent GLRA1 subunit or GLRA2 subunit</note>
    </ligand>
</feature>
<feature type="binding site" evidence="16 23">
    <location>
        <position position="250"/>
    </location>
    <ligand>
        <name>glycine</name>
        <dbReference type="ChEBI" id="CHEBI:57305"/>
        <label>2</label>
        <note>agonist; ligand shared with an adjacent GLRA2 subunit</note>
    </ligand>
</feature>
<feature type="site" description="Important for obstruction of the ion pore in the closed conformation" evidence="3">
    <location>
        <position position="307"/>
    </location>
</feature>
<feature type="modified residue" description="Phosphothreonine" evidence="2">
    <location>
        <position position="391"/>
    </location>
</feature>
<feature type="glycosylation site" description="N-linked (GlcNAc...) asparagine" evidence="16">
    <location>
        <position position="54"/>
    </location>
</feature>
<feature type="glycosylation site" description="N-linked (GlcNAc...) asparagine" evidence="16">
    <location>
        <position position="242"/>
    </location>
</feature>
<feature type="disulfide bond" evidence="16 23 24 25 26">
    <location>
        <begin position="183"/>
        <end position="197"/>
    </location>
</feature>
<feature type="disulfide bond" evidence="16 23 24 25 26">
    <location>
        <begin position="243"/>
        <end position="255"/>
    </location>
</feature>
<feature type="splice variant" id="VSP_045466" description="In isoform 2." evidence="20">
    <original>I</original>
    <variation>W</variation>
    <location>
        <position position="303"/>
    </location>
</feature>
<feature type="splice variant" id="VSP_045467" description="In isoform 2." evidence="20">
    <location>
        <begin position="304"/>
        <end position="497"/>
    </location>
</feature>
<feature type="sequence variant" id="VAR_068246" description="In HKPX2; heteropentameric channel complexes with GLRA1 require much higher glycine levels for channel activation; no effect on expression at the cell membrane; dbSNP:rs398122856." evidence="10 13">
    <original>M</original>
    <variation>R</variation>
    <location>
        <position position="199"/>
    </location>
</feature>
<feature type="sequence variant" id="VAR_035070" description="In HKPX2; heteropentameric channel complexes with GLRA1 require much higher glycine levels for channel activation; dbSNP:rs121909749." evidence="5">
    <original>G</original>
    <variation>D</variation>
    <location>
        <position position="251"/>
    </location>
</feature>
<feature type="sequence variant" id="VAR_075502" description="In HKPX2; heteropentameric channel complexes with GLRA1 have reduced expression at the cell membrane and display spontaneous channel opening in the absence of extracellular glycine." evidence="13">
    <original>L</original>
    <variation>R</variation>
    <location>
        <position position="307"/>
    </location>
</feature>
<feature type="sequence variant" id="VAR_075503" description="In HKPX2; heteropentameric channel complexes with GLRA1 have reduced expression at the cell membrane and reduced channel activity." evidence="13">
    <original>W</original>
    <variation>C</variation>
    <location>
        <position position="332"/>
    </location>
</feature>
<feature type="sequence variant" id="VAR_088405" description="In HKPX2; reduced GLRB protein levels; reduced glycine sensitivity; reduced channel activity; does not affect chloride selectivity of the receptor ionophore." evidence="17">
    <original>A</original>
    <variation>P</variation>
    <location>
        <position position="477"/>
    </location>
</feature>
<feature type="mutagenesis site" description="Prevents proper assembly of the GLRA2/GLRB heteropentamer receptor." evidence="16">
    <original>N</original>
    <variation>A</variation>
    <location>
        <position position="54"/>
    </location>
</feature>
<feature type="mutagenesis site" description="Loss of glycosylation. Prevents proper assembly of the GLRA2/GLRB heteropentamer receptor." evidence="16">
    <original>N</original>
    <variation>A</variation>
    <location>
        <position position="242"/>
    </location>
</feature>